<accession>Q2KXY8</accession>
<comment type="function">
    <text evidence="1">Together with the chaperonin GroEL, plays an essential role in assisting protein folding. The GroEL-GroES system forms a nano-cage that allows encapsulation of the non-native substrate proteins and provides a physical environment optimized to promote and accelerate protein folding. GroES binds to the apical surface of the GroEL ring, thereby capping the opening of the GroEL channel.</text>
</comment>
<comment type="subunit">
    <text evidence="1">Heptamer of 7 subunits arranged in a ring. Interacts with the chaperonin GroEL.</text>
</comment>
<comment type="subcellular location">
    <subcellularLocation>
        <location evidence="1">Cytoplasm</location>
    </subcellularLocation>
</comment>
<comment type="similarity">
    <text evidence="1">Belongs to the GroES chaperonin family.</text>
</comment>
<keyword id="KW-0143">Chaperone</keyword>
<keyword id="KW-0963">Cytoplasm</keyword>
<keyword id="KW-1185">Reference proteome</keyword>
<dbReference type="EMBL" id="AM167904">
    <property type="protein sequence ID" value="CAJ48185.1"/>
    <property type="molecule type" value="Genomic_DNA"/>
</dbReference>
<dbReference type="RefSeq" id="WP_012416276.1">
    <property type="nucleotide sequence ID" value="NC_010645.1"/>
</dbReference>
<dbReference type="SMR" id="Q2KXY8"/>
<dbReference type="STRING" id="360910.BAV0580"/>
<dbReference type="GeneID" id="92936241"/>
<dbReference type="KEGG" id="bav:BAV0580"/>
<dbReference type="eggNOG" id="COG0234">
    <property type="taxonomic scope" value="Bacteria"/>
</dbReference>
<dbReference type="HOGENOM" id="CLU_132825_2_0_4"/>
<dbReference type="OrthoDB" id="9806791at2"/>
<dbReference type="Proteomes" id="UP000001977">
    <property type="component" value="Chromosome"/>
</dbReference>
<dbReference type="GO" id="GO:0005737">
    <property type="term" value="C:cytoplasm"/>
    <property type="evidence" value="ECO:0007669"/>
    <property type="project" value="UniProtKB-SubCell"/>
</dbReference>
<dbReference type="GO" id="GO:0005524">
    <property type="term" value="F:ATP binding"/>
    <property type="evidence" value="ECO:0007669"/>
    <property type="project" value="InterPro"/>
</dbReference>
<dbReference type="GO" id="GO:0046872">
    <property type="term" value="F:metal ion binding"/>
    <property type="evidence" value="ECO:0007669"/>
    <property type="project" value="TreeGrafter"/>
</dbReference>
<dbReference type="GO" id="GO:0044183">
    <property type="term" value="F:protein folding chaperone"/>
    <property type="evidence" value="ECO:0007669"/>
    <property type="project" value="InterPro"/>
</dbReference>
<dbReference type="GO" id="GO:0051087">
    <property type="term" value="F:protein-folding chaperone binding"/>
    <property type="evidence" value="ECO:0007669"/>
    <property type="project" value="TreeGrafter"/>
</dbReference>
<dbReference type="GO" id="GO:0051082">
    <property type="term" value="F:unfolded protein binding"/>
    <property type="evidence" value="ECO:0007669"/>
    <property type="project" value="TreeGrafter"/>
</dbReference>
<dbReference type="GO" id="GO:0051085">
    <property type="term" value="P:chaperone cofactor-dependent protein refolding"/>
    <property type="evidence" value="ECO:0007669"/>
    <property type="project" value="TreeGrafter"/>
</dbReference>
<dbReference type="CDD" id="cd00320">
    <property type="entry name" value="cpn10"/>
    <property type="match status" value="1"/>
</dbReference>
<dbReference type="FunFam" id="2.30.33.40:FF:000001">
    <property type="entry name" value="10 kDa chaperonin"/>
    <property type="match status" value="1"/>
</dbReference>
<dbReference type="Gene3D" id="2.30.33.40">
    <property type="entry name" value="GroES chaperonin"/>
    <property type="match status" value="1"/>
</dbReference>
<dbReference type="HAMAP" id="MF_00580">
    <property type="entry name" value="CH10"/>
    <property type="match status" value="1"/>
</dbReference>
<dbReference type="InterPro" id="IPR020818">
    <property type="entry name" value="Chaperonin_GroES"/>
</dbReference>
<dbReference type="InterPro" id="IPR037124">
    <property type="entry name" value="Chaperonin_GroES_sf"/>
</dbReference>
<dbReference type="InterPro" id="IPR018369">
    <property type="entry name" value="Chaprnonin_Cpn10_CS"/>
</dbReference>
<dbReference type="InterPro" id="IPR011032">
    <property type="entry name" value="GroES-like_sf"/>
</dbReference>
<dbReference type="NCBIfam" id="NF001527">
    <property type="entry name" value="PRK00364.1-2"/>
    <property type="match status" value="1"/>
</dbReference>
<dbReference type="NCBIfam" id="NF001529">
    <property type="entry name" value="PRK00364.1-5"/>
    <property type="match status" value="1"/>
</dbReference>
<dbReference type="NCBIfam" id="NF001531">
    <property type="entry name" value="PRK00364.2-2"/>
    <property type="match status" value="1"/>
</dbReference>
<dbReference type="NCBIfam" id="NF001533">
    <property type="entry name" value="PRK00364.2-4"/>
    <property type="match status" value="1"/>
</dbReference>
<dbReference type="PANTHER" id="PTHR10772">
    <property type="entry name" value="10 KDA HEAT SHOCK PROTEIN"/>
    <property type="match status" value="1"/>
</dbReference>
<dbReference type="PANTHER" id="PTHR10772:SF58">
    <property type="entry name" value="CO-CHAPERONIN GROES"/>
    <property type="match status" value="1"/>
</dbReference>
<dbReference type="Pfam" id="PF00166">
    <property type="entry name" value="Cpn10"/>
    <property type="match status" value="1"/>
</dbReference>
<dbReference type="PRINTS" id="PR00297">
    <property type="entry name" value="CHAPERONIN10"/>
</dbReference>
<dbReference type="SMART" id="SM00883">
    <property type="entry name" value="Cpn10"/>
    <property type="match status" value="1"/>
</dbReference>
<dbReference type="SUPFAM" id="SSF50129">
    <property type="entry name" value="GroES-like"/>
    <property type="match status" value="1"/>
</dbReference>
<dbReference type="PROSITE" id="PS00681">
    <property type="entry name" value="CHAPERONINS_CPN10"/>
    <property type="match status" value="1"/>
</dbReference>
<proteinExistence type="inferred from homology"/>
<name>CH10_BORA1</name>
<feature type="chain" id="PRO_1000025219" description="Co-chaperonin GroES">
    <location>
        <begin position="1"/>
        <end position="95"/>
    </location>
</feature>
<sequence>MALRPLHDRVIVKRLDNERKTASGIVIPDSAAEKPDQGEVLAVGPGKKTEDGKILPVDLKVGDKVLFGKYAGQGVKVDGEELLVIREEEILAVIQ</sequence>
<reference key="1">
    <citation type="journal article" date="2006" name="J. Bacteriol.">
        <title>Comparison of the genome sequence of the poultry pathogen Bordetella avium with those of B. bronchiseptica, B. pertussis, and B. parapertussis reveals extensive diversity in surface structures associated with host interaction.</title>
        <authorList>
            <person name="Sebaihia M."/>
            <person name="Preston A."/>
            <person name="Maskell D.J."/>
            <person name="Kuzmiak H."/>
            <person name="Connell T.D."/>
            <person name="King N.D."/>
            <person name="Orndorff P.E."/>
            <person name="Miyamoto D.M."/>
            <person name="Thomson N.R."/>
            <person name="Harris D."/>
            <person name="Goble A."/>
            <person name="Lord A."/>
            <person name="Murphy L."/>
            <person name="Quail M.A."/>
            <person name="Rutter S."/>
            <person name="Squares R."/>
            <person name="Squares S."/>
            <person name="Woodward J."/>
            <person name="Parkhill J."/>
            <person name="Temple L.M."/>
        </authorList>
    </citation>
    <scope>NUCLEOTIDE SEQUENCE [LARGE SCALE GENOMIC DNA]</scope>
    <source>
        <strain>197N</strain>
    </source>
</reference>
<protein>
    <recommendedName>
        <fullName evidence="1">Co-chaperonin GroES</fullName>
    </recommendedName>
    <alternativeName>
        <fullName evidence="1">10 kDa chaperonin</fullName>
    </alternativeName>
    <alternativeName>
        <fullName evidence="1">Chaperonin-10</fullName>
        <shortName evidence="1">Cpn10</shortName>
    </alternativeName>
</protein>
<evidence type="ECO:0000255" key="1">
    <source>
        <dbReference type="HAMAP-Rule" id="MF_00580"/>
    </source>
</evidence>
<gene>
    <name evidence="1" type="primary">groES</name>
    <name evidence="1" type="synonym">groS</name>
    <name type="ordered locus">BAV0580</name>
</gene>
<organism>
    <name type="scientific">Bordetella avium (strain 197N)</name>
    <dbReference type="NCBI Taxonomy" id="360910"/>
    <lineage>
        <taxon>Bacteria</taxon>
        <taxon>Pseudomonadati</taxon>
        <taxon>Pseudomonadota</taxon>
        <taxon>Betaproteobacteria</taxon>
        <taxon>Burkholderiales</taxon>
        <taxon>Alcaligenaceae</taxon>
        <taxon>Bordetella</taxon>
    </lineage>
</organism>